<dbReference type="EC" id="1.7.1.13" evidence="1"/>
<dbReference type="EMBL" id="CR626927">
    <property type="protein sequence ID" value="CAH07109.1"/>
    <property type="molecule type" value="Genomic_DNA"/>
</dbReference>
<dbReference type="RefSeq" id="WP_005800786.1">
    <property type="nucleotide sequence ID" value="NZ_UFTH01000001.1"/>
</dbReference>
<dbReference type="SMR" id="Q5LFI5"/>
<dbReference type="PaxDb" id="272559-BF9343_1328"/>
<dbReference type="GeneID" id="60365944"/>
<dbReference type="KEGG" id="bfs:BF9343_1328"/>
<dbReference type="eggNOG" id="COG0780">
    <property type="taxonomic scope" value="Bacteria"/>
</dbReference>
<dbReference type="HOGENOM" id="CLU_102489_0_1_10"/>
<dbReference type="UniPathway" id="UPA00392"/>
<dbReference type="Proteomes" id="UP000006731">
    <property type="component" value="Chromosome"/>
</dbReference>
<dbReference type="GO" id="GO:0005737">
    <property type="term" value="C:cytoplasm"/>
    <property type="evidence" value="ECO:0007669"/>
    <property type="project" value="UniProtKB-SubCell"/>
</dbReference>
<dbReference type="GO" id="GO:0033739">
    <property type="term" value="F:preQ1 synthase activity"/>
    <property type="evidence" value="ECO:0007669"/>
    <property type="project" value="UniProtKB-UniRule"/>
</dbReference>
<dbReference type="GO" id="GO:0008616">
    <property type="term" value="P:queuosine biosynthetic process"/>
    <property type="evidence" value="ECO:0007669"/>
    <property type="project" value="UniProtKB-UniRule"/>
</dbReference>
<dbReference type="GO" id="GO:0006400">
    <property type="term" value="P:tRNA modification"/>
    <property type="evidence" value="ECO:0007669"/>
    <property type="project" value="UniProtKB-UniRule"/>
</dbReference>
<dbReference type="Gene3D" id="3.30.1130.10">
    <property type="match status" value="1"/>
</dbReference>
<dbReference type="HAMAP" id="MF_00818">
    <property type="entry name" value="QueF_type1"/>
    <property type="match status" value="1"/>
</dbReference>
<dbReference type="InterPro" id="IPR043133">
    <property type="entry name" value="GTP-CH-I_C/QueF"/>
</dbReference>
<dbReference type="InterPro" id="IPR050084">
    <property type="entry name" value="NADPH_dep_7-cyano-7-deazaG_red"/>
</dbReference>
<dbReference type="InterPro" id="IPR029500">
    <property type="entry name" value="QueF"/>
</dbReference>
<dbReference type="InterPro" id="IPR016856">
    <property type="entry name" value="QueF_type1"/>
</dbReference>
<dbReference type="NCBIfam" id="TIGR03139">
    <property type="entry name" value="QueF-II"/>
    <property type="match status" value="1"/>
</dbReference>
<dbReference type="PANTHER" id="PTHR34354">
    <property type="entry name" value="NADPH-DEPENDENT 7-CYANO-7-DEAZAGUANINE REDUCTASE"/>
    <property type="match status" value="1"/>
</dbReference>
<dbReference type="PANTHER" id="PTHR34354:SF1">
    <property type="entry name" value="NADPH-DEPENDENT 7-CYANO-7-DEAZAGUANINE REDUCTASE"/>
    <property type="match status" value="1"/>
</dbReference>
<dbReference type="Pfam" id="PF14489">
    <property type="entry name" value="QueF"/>
    <property type="match status" value="1"/>
</dbReference>
<dbReference type="PIRSF" id="PIRSF027377">
    <property type="entry name" value="Nitrile_oxidored_QueF"/>
    <property type="match status" value="1"/>
</dbReference>
<dbReference type="SUPFAM" id="SSF55620">
    <property type="entry name" value="Tetrahydrobiopterin biosynthesis enzymes-like"/>
    <property type="match status" value="1"/>
</dbReference>
<reference key="1">
    <citation type="journal article" date="2005" name="Science">
        <title>Extensive DNA inversions in the B. fragilis genome control variable gene expression.</title>
        <authorList>
            <person name="Cerdeno-Tarraga A.-M."/>
            <person name="Patrick S."/>
            <person name="Crossman L.C."/>
            <person name="Blakely G."/>
            <person name="Abratt V."/>
            <person name="Lennard N."/>
            <person name="Poxton I."/>
            <person name="Duerden B."/>
            <person name="Harris B."/>
            <person name="Quail M.A."/>
            <person name="Barron A."/>
            <person name="Clark L."/>
            <person name="Corton C."/>
            <person name="Doggett J."/>
            <person name="Holden M.T.G."/>
            <person name="Larke N."/>
            <person name="Line A."/>
            <person name="Lord A."/>
            <person name="Norbertczak H."/>
            <person name="Ormond D."/>
            <person name="Price C."/>
            <person name="Rabbinowitsch E."/>
            <person name="Woodward J."/>
            <person name="Barrell B.G."/>
            <person name="Parkhill J."/>
        </authorList>
    </citation>
    <scope>NUCLEOTIDE SEQUENCE [LARGE SCALE GENOMIC DNA]</scope>
    <source>
        <strain>ATCC 25285 / DSM 2151 / CCUG 4856 / JCM 11019 / LMG 10263 / NCTC 9343 / Onslow / VPI 2553 / EN-2</strain>
    </source>
</reference>
<proteinExistence type="inferred from homology"/>
<accession>Q5LFI5</accession>
<feature type="chain" id="PRO_0000162960" description="NADPH-dependent 7-cyano-7-deazaguanine reductase">
    <location>
        <begin position="1"/>
        <end position="151"/>
    </location>
</feature>
<feature type="active site" description="Thioimide intermediate" evidence="1">
    <location>
        <position position="51"/>
    </location>
</feature>
<feature type="active site" description="Proton donor" evidence="1">
    <location>
        <position position="58"/>
    </location>
</feature>
<feature type="binding site" evidence="1">
    <location>
        <begin position="73"/>
        <end position="75"/>
    </location>
    <ligand>
        <name>substrate</name>
    </ligand>
</feature>
<feature type="binding site" evidence="1">
    <location>
        <begin position="92"/>
        <end position="93"/>
    </location>
    <ligand>
        <name>substrate</name>
    </ligand>
</feature>
<sequence>MTELKEQLSLLGRKTEYKQDYAPEVLEAFDNKHPENDYWVRFNCPEFTSLCPITGQPDFAEIRISYLPDVKMVESKSLKLYLFSFRNHGAFHEDCVNIIMKDLIRLMDPKYIEVTGIFTPRGGISIYPYANYGRPGTKYEEMAIHRLMNHE</sequence>
<organism>
    <name type="scientific">Bacteroides fragilis (strain ATCC 25285 / DSM 2151 / CCUG 4856 / JCM 11019 / LMG 10263 / NCTC 9343 / Onslow / VPI 2553 / EN-2)</name>
    <dbReference type="NCBI Taxonomy" id="272559"/>
    <lineage>
        <taxon>Bacteria</taxon>
        <taxon>Pseudomonadati</taxon>
        <taxon>Bacteroidota</taxon>
        <taxon>Bacteroidia</taxon>
        <taxon>Bacteroidales</taxon>
        <taxon>Bacteroidaceae</taxon>
        <taxon>Bacteroides</taxon>
    </lineage>
</organism>
<keyword id="KW-0963">Cytoplasm</keyword>
<keyword id="KW-0521">NADP</keyword>
<keyword id="KW-0560">Oxidoreductase</keyword>
<keyword id="KW-0671">Queuosine biosynthesis</keyword>
<comment type="function">
    <text evidence="1">Catalyzes the NADPH-dependent reduction of 7-cyano-7-deazaguanine (preQ0) to 7-aminomethyl-7-deazaguanine (preQ1).</text>
</comment>
<comment type="catalytic activity">
    <reaction evidence="1">
        <text>7-aminomethyl-7-carbaguanine + 2 NADP(+) = 7-cyano-7-deazaguanine + 2 NADPH + 3 H(+)</text>
        <dbReference type="Rhea" id="RHEA:13409"/>
        <dbReference type="ChEBI" id="CHEBI:15378"/>
        <dbReference type="ChEBI" id="CHEBI:45075"/>
        <dbReference type="ChEBI" id="CHEBI:57783"/>
        <dbReference type="ChEBI" id="CHEBI:58349"/>
        <dbReference type="ChEBI" id="CHEBI:58703"/>
        <dbReference type="EC" id="1.7.1.13"/>
    </reaction>
</comment>
<comment type="pathway">
    <text evidence="1">tRNA modification; tRNA-queuosine biosynthesis.</text>
</comment>
<comment type="subcellular location">
    <subcellularLocation>
        <location evidence="1">Cytoplasm</location>
    </subcellularLocation>
</comment>
<comment type="similarity">
    <text evidence="1">Belongs to the GTP cyclohydrolase I family. QueF type 1 subfamily.</text>
</comment>
<evidence type="ECO:0000255" key="1">
    <source>
        <dbReference type="HAMAP-Rule" id="MF_00818"/>
    </source>
</evidence>
<gene>
    <name evidence="1" type="primary">queF</name>
    <name type="ordered locus">BF1397</name>
</gene>
<name>QUEF_BACFN</name>
<protein>
    <recommendedName>
        <fullName evidence="1">NADPH-dependent 7-cyano-7-deazaguanine reductase</fullName>
        <ecNumber evidence="1">1.7.1.13</ecNumber>
    </recommendedName>
    <alternativeName>
        <fullName evidence="1">7-cyano-7-carbaguanine reductase</fullName>
    </alternativeName>
    <alternativeName>
        <fullName evidence="1">NADPH-dependent nitrile oxidoreductase</fullName>
    </alternativeName>
    <alternativeName>
        <fullName evidence="1">PreQ(0) reductase</fullName>
    </alternativeName>
</protein>